<proteinExistence type="inferred from homology"/>
<sequence>MKVRASVKKMCRNCKVIKRNRVVRVICTDPRHKQRQG</sequence>
<accession>Q14J99</accession>
<gene>
    <name evidence="1" type="primary">rpmJ</name>
    <name type="ordered locus">FTF0346</name>
</gene>
<keyword id="KW-0687">Ribonucleoprotein</keyword>
<keyword id="KW-0689">Ribosomal protein</keyword>
<evidence type="ECO:0000255" key="1">
    <source>
        <dbReference type="HAMAP-Rule" id="MF_00251"/>
    </source>
</evidence>
<evidence type="ECO:0000305" key="2"/>
<organism>
    <name type="scientific">Francisella tularensis subsp. tularensis (strain FSC 198)</name>
    <dbReference type="NCBI Taxonomy" id="393115"/>
    <lineage>
        <taxon>Bacteria</taxon>
        <taxon>Pseudomonadati</taxon>
        <taxon>Pseudomonadota</taxon>
        <taxon>Gammaproteobacteria</taxon>
        <taxon>Thiotrichales</taxon>
        <taxon>Francisellaceae</taxon>
        <taxon>Francisella</taxon>
    </lineage>
</organism>
<feature type="chain" id="PRO_0000302206" description="Large ribosomal subunit protein bL36">
    <location>
        <begin position="1"/>
        <end position="37"/>
    </location>
</feature>
<name>RL36_FRAT1</name>
<protein>
    <recommendedName>
        <fullName evidence="1">Large ribosomal subunit protein bL36</fullName>
    </recommendedName>
    <alternativeName>
        <fullName evidence="2">50S ribosomal protein L36</fullName>
    </alternativeName>
</protein>
<reference key="1">
    <citation type="journal article" date="2007" name="PLoS ONE">
        <title>Genome sequencing shows that European isolates of Francisella tularensis subspecies tularensis are almost identical to US laboratory strain Schu S4.</title>
        <authorList>
            <person name="Chaudhuri R.R."/>
            <person name="Ren C.-P."/>
            <person name="Desmond L."/>
            <person name="Vincent G.A."/>
            <person name="Silman N.J."/>
            <person name="Brehm J.K."/>
            <person name="Elmore M.J."/>
            <person name="Hudson M.J."/>
            <person name="Forsman M."/>
            <person name="Isherwood K.E."/>
            <person name="Gurycova D."/>
            <person name="Minton N.P."/>
            <person name="Titball R.W."/>
            <person name="Pallen M.J."/>
            <person name="Vipond R."/>
        </authorList>
    </citation>
    <scope>NUCLEOTIDE SEQUENCE [LARGE SCALE GENOMIC DNA]</scope>
    <source>
        <strain>FSC 198</strain>
    </source>
</reference>
<dbReference type="EMBL" id="AM286280">
    <property type="protein sequence ID" value="CAL08362.1"/>
    <property type="molecule type" value="Genomic_DNA"/>
</dbReference>
<dbReference type="RefSeq" id="WP_003017816.1">
    <property type="nucleotide sequence ID" value="NC_008245.1"/>
</dbReference>
<dbReference type="SMR" id="Q14J99"/>
<dbReference type="GeneID" id="93254575"/>
<dbReference type="KEGG" id="ftf:FTF0346"/>
<dbReference type="HOGENOM" id="CLU_135723_6_2_6"/>
<dbReference type="GO" id="GO:0005737">
    <property type="term" value="C:cytoplasm"/>
    <property type="evidence" value="ECO:0007669"/>
    <property type="project" value="UniProtKB-ARBA"/>
</dbReference>
<dbReference type="GO" id="GO:1990904">
    <property type="term" value="C:ribonucleoprotein complex"/>
    <property type="evidence" value="ECO:0007669"/>
    <property type="project" value="UniProtKB-KW"/>
</dbReference>
<dbReference type="GO" id="GO:0005840">
    <property type="term" value="C:ribosome"/>
    <property type="evidence" value="ECO:0007669"/>
    <property type="project" value="UniProtKB-KW"/>
</dbReference>
<dbReference type="GO" id="GO:0003735">
    <property type="term" value="F:structural constituent of ribosome"/>
    <property type="evidence" value="ECO:0007669"/>
    <property type="project" value="InterPro"/>
</dbReference>
<dbReference type="GO" id="GO:0006412">
    <property type="term" value="P:translation"/>
    <property type="evidence" value="ECO:0007669"/>
    <property type="project" value="UniProtKB-UniRule"/>
</dbReference>
<dbReference type="HAMAP" id="MF_00251">
    <property type="entry name" value="Ribosomal_bL36"/>
    <property type="match status" value="1"/>
</dbReference>
<dbReference type="InterPro" id="IPR000473">
    <property type="entry name" value="Ribosomal_bL36"/>
</dbReference>
<dbReference type="InterPro" id="IPR035977">
    <property type="entry name" value="Ribosomal_bL36_sp"/>
</dbReference>
<dbReference type="NCBIfam" id="TIGR01022">
    <property type="entry name" value="rpmJ_bact"/>
    <property type="match status" value="1"/>
</dbReference>
<dbReference type="PANTHER" id="PTHR42888">
    <property type="entry name" value="50S RIBOSOMAL PROTEIN L36, CHLOROPLASTIC"/>
    <property type="match status" value="1"/>
</dbReference>
<dbReference type="PANTHER" id="PTHR42888:SF1">
    <property type="entry name" value="LARGE RIBOSOMAL SUBUNIT PROTEIN BL36C"/>
    <property type="match status" value="1"/>
</dbReference>
<dbReference type="Pfam" id="PF00444">
    <property type="entry name" value="Ribosomal_L36"/>
    <property type="match status" value="1"/>
</dbReference>
<dbReference type="SUPFAM" id="SSF57840">
    <property type="entry name" value="Ribosomal protein L36"/>
    <property type="match status" value="1"/>
</dbReference>
<dbReference type="PROSITE" id="PS00828">
    <property type="entry name" value="RIBOSOMAL_L36"/>
    <property type="match status" value="1"/>
</dbReference>
<comment type="similarity">
    <text evidence="1">Belongs to the bacterial ribosomal protein bL36 family.</text>
</comment>